<organism>
    <name type="scientific">Klebsiella pneumoniae subsp. pneumoniae (strain ATCC 700721 / MGH 78578)</name>
    <dbReference type="NCBI Taxonomy" id="272620"/>
    <lineage>
        <taxon>Bacteria</taxon>
        <taxon>Pseudomonadati</taxon>
        <taxon>Pseudomonadota</taxon>
        <taxon>Gammaproteobacteria</taxon>
        <taxon>Enterobacterales</taxon>
        <taxon>Enterobacteriaceae</taxon>
        <taxon>Klebsiella/Raoultella group</taxon>
        <taxon>Klebsiella</taxon>
        <taxon>Klebsiella pneumoniae complex</taxon>
    </lineage>
</organism>
<comment type="function">
    <text evidence="1">Catalyzes the ATP-dependent transfer of a sulfur to tRNA to produce 4-thiouridine in position 8 of tRNAs, which functions as a near-UV photosensor. Also catalyzes the transfer of sulfur to the sulfur carrier protein ThiS, forming ThiS-thiocarboxylate. This is a step in the synthesis of thiazole, in the thiamine biosynthesis pathway. The sulfur is donated as persulfide by IscS.</text>
</comment>
<comment type="catalytic activity">
    <reaction evidence="1">
        <text>[ThiI sulfur-carrier protein]-S-sulfanyl-L-cysteine + a uridine in tRNA + 2 reduced [2Fe-2S]-[ferredoxin] + ATP + H(+) = [ThiI sulfur-carrier protein]-L-cysteine + a 4-thiouridine in tRNA + 2 oxidized [2Fe-2S]-[ferredoxin] + AMP + diphosphate</text>
        <dbReference type="Rhea" id="RHEA:24176"/>
        <dbReference type="Rhea" id="RHEA-COMP:10000"/>
        <dbReference type="Rhea" id="RHEA-COMP:10001"/>
        <dbReference type="Rhea" id="RHEA-COMP:13337"/>
        <dbReference type="Rhea" id="RHEA-COMP:13338"/>
        <dbReference type="Rhea" id="RHEA-COMP:13339"/>
        <dbReference type="Rhea" id="RHEA-COMP:13340"/>
        <dbReference type="ChEBI" id="CHEBI:15378"/>
        <dbReference type="ChEBI" id="CHEBI:29950"/>
        <dbReference type="ChEBI" id="CHEBI:30616"/>
        <dbReference type="ChEBI" id="CHEBI:33019"/>
        <dbReference type="ChEBI" id="CHEBI:33737"/>
        <dbReference type="ChEBI" id="CHEBI:33738"/>
        <dbReference type="ChEBI" id="CHEBI:61963"/>
        <dbReference type="ChEBI" id="CHEBI:65315"/>
        <dbReference type="ChEBI" id="CHEBI:136798"/>
        <dbReference type="ChEBI" id="CHEBI:456215"/>
        <dbReference type="EC" id="2.8.1.4"/>
    </reaction>
</comment>
<comment type="catalytic activity">
    <reaction evidence="1">
        <text>[ThiS sulfur-carrier protein]-C-terminal Gly-Gly-AMP + S-sulfanyl-L-cysteinyl-[cysteine desulfurase] + AH2 = [ThiS sulfur-carrier protein]-C-terminal-Gly-aminoethanethioate + L-cysteinyl-[cysteine desulfurase] + A + AMP + 2 H(+)</text>
        <dbReference type="Rhea" id="RHEA:43340"/>
        <dbReference type="Rhea" id="RHEA-COMP:12157"/>
        <dbReference type="Rhea" id="RHEA-COMP:12158"/>
        <dbReference type="Rhea" id="RHEA-COMP:12910"/>
        <dbReference type="Rhea" id="RHEA-COMP:19908"/>
        <dbReference type="ChEBI" id="CHEBI:13193"/>
        <dbReference type="ChEBI" id="CHEBI:15378"/>
        <dbReference type="ChEBI" id="CHEBI:17499"/>
        <dbReference type="ChEBI" id="CHEBI:29950"/>
        <dbReference type="ChEBI" id="CHEBI:61963"/>
        <dbReference type="ChEBI" id="CHEBI:90618"/>
        <dbReference type="ChEBI" id="CHEBI:232372"/>
        <dbReference type="ChEBI" id="CHEBI:456215"/>
    </reaction>
</comment>
<comment type="pathway">
    <text evidence="1">Cofactor biosynthesis; thiamine diphosphate biosynthesis.</text>
</comment>
<comment type="subcellular location">
    <subcellularLocation>
        <location evidence="1">Cytoplasm</location>
    </subcellularLocation>
</comment>
<comment type="similarity">
    <text evidence="1">Belongs to the ThiI family.</text>
</comment>
<feature type="chain" id="PRO_1000074231" description="tRNA sulfurtransferase">
    <location>
        <begin position="1"/>
        <end position="482"/>
    </location>
</feature>
<feature type="domain" description="THUMP" evidence="1">
    <location>
        <begin position="61"/>
        <end position="165"/>
    </location>
</feature>
<feature type="domain" description="Rhodanese" evidence="1">
    <location>
        <begin position="404"/>
        <end position="482"/>
    </location>
</feature>
<feature type="active site" description="Cysteine persulfide intermediate" evidence="1">
    <location>
        <position position="456"/>
    </location>
</feature>
<feature type="binding site" evidence="1">
    <location>
        <begin position="183"/>
        <end position="184"/>
    </location>
    <ligand>
        <name>ATP</name>
        <dbReference type="ChEBI" id="CHEBI:30616"/>
    </ligand>
</feature>
<feature type="binding site" evidence="1">
    <location>
        <position position="265"/>
    </location>
    <ligand>
        <name>ATP</name>
        <dbReference type="ChEBI" id="CHEBI:30616"/>
    </ligand>
</feature>
<feature type="binding site" evidence="1">
    <location>
        <position position="287"/>
    </location>
    <ligand>
        <name>ATP</name>
        <dbReference type="ChEBI" id="CHEBI:30616"/>
    </ligand>
</feature>
<feature type="binding site" evidence="1">
    <location>
        <position position="296"/>
    </location>
    <ligand>
        <name>ATP</name>
        <dbReference type="ChEBI" id="CHEBI:30616"/>
    </ligand>
</feature>
<feature type="disulfide bond" description="Redox-active" evidence="1">
    <location>
        <begin position="344"/>
        <end position="456"/>
    </location>
</feature>
<sequence length="482" mass="54717">MKFIIKLFPEITIKSQSVRLRFIKILTGNIRNVLKNYDETLAVVRHWDHIEVRAKDENQRPAIRDALTRIPGIHHILEVEDVPFTSLHDIFEQTLPLWREALEGKTFCVRVKRRGKHEFTSIEVERYVGGGLNQHIETARVKLTDPDVTVNLEIENDRLLLVKGRYEGIGGFPIGTQEDVLSLISGGFDSGVSSYMLMRRGCRVHYCFFNLGGAAHEIGVRQVAHYLWNRFGSSHRVRFVAINFEPVVGEILEKVDDGQMGVVLKRMMVRAASKVAERYGVQALVTGEALGQVSSQTLTNLRLIDNVSDTLILRPLISHDKEHIIDLAREIGTEDFARTMPEYCGVISKSPTVKAVKAKIEAEEEHFDFSILDKVVEEASNIDIREIAQQTEETVVEVETVTGFGANDAILDIRSIDEQEDKPLKVEGVEVVSLPFYKLSTKFGDLDQSKTWLLWCERGVMSRLQALYLREQGFSNVKVYRP</sequence>
<evidence type="ECO:0000255" key="1">
    <source>
        <dbReference type="HAMAP-Rule" id="MF_00021"/>
    </source>
</evidence>
<keyword id="KW-0067">ATP-binding</keyword>
<keyword id="KW-0963">Cytoplasm</keyword>
<keyword id="KW-1015">Disulfide bond</keyword>
<keyword id="KW-0547">Nucleotide-binding</keyword>
<keyword id="KW-0676">Redox-active center</keyword>
<keyword id="KW-0694">RNA-binding</keyword>
<keyword id="KW-0784">Thiamine biosynthesis</keyword>
<keyword id="KW-0808">Transferase</keyword>
<keyword id="KW-0820">tRNA-binding</keyword>
<dbReference type="EC" id="2.8.1.4" evidence="1"/>
<dbReference type="EMBL" id="CP000647">
    <property type="protein sequence ID" value="ABR75827.1"/>
    <property type="molecule type" value="Genomic_DNA"/>
</dbReference>
<dbReference type="RefSeq" id="WP_004151340.1">
    <property type="nucleotide sequence ID" value="NC_009648.1"/>
</dbReference>
<dbReference type="SMR" id="A6T5F6"/>
<dbReference type="STRING" id="272620.KPN_00375"/>
<dbReference type="PaxDb" id="272620-KPN_00375"/>
<dbReference type="DNASU" id="5340066"/>
<dbReference type="EnsemblBacteria" id="ABR75827">
    <property type="protein sequence ID" value="ABR75827"/>
    <property type="gene ID" value="KPN_00375"/>
</dbReference>
<dbReference type="GeneID" id="93252580"/>
<dbReference type="KEGG" id="kpn:KPN_00375"/>
<dbReference type="HOGENOM" id="CLU_037952_4_1_6"/>
<dbReference type="UniPathway" id="UPA00060"/>
<dbReference type="Proteomes" id="UP000000265">
    <property type="component" value="Chromosome"/>
</dbReference>
<dbReference type="GO" id="GO:0005829">
    <property type="term" value="C:cytosol"/>
    <property type="evidence" value="ECO:0007669"/>
    <property type="project" value="TreeGrafter"/>
</dbReference>
<dbReference type="GO" id="GO:0005524">
    <property type="term" value="F:ATP binding"/>
    <property type="evidence" value="ECO:0007669"/>
    <property type="project" value="UniProtKB-UniRule"/>
</dbReference>
<dbReference type="GO" id="GO:0004810">
    <property type="term" value="F:CCA tRNA nucleotidyltransferase activity"/>
    <property type="evidence" value="ECO:0007669"/>
    <property type="project" value="InterPro"/>
</dbReference>
<dbReference type="GO" id="GO:0000049">
    <property type="term" value="F:tRNA binding"/>
    <property type="evidence" value="ECO:0007669"/>
    <property type="project" value="UniProtKB-UniRule"/>
</dbReference>
<dbReference type="GO" id="GO:0140741">
    <property type="term" value="F:tRNA-uracil-4 sulfurtransferase activity"/>
    <property type="evidence" value="ECO:0007669"/>
    <property type="project" value="UniProtKB-EC"/>
</dbReference>
<dbReference type="GO" id="GO:0009228">
    <property type="term" value="P:thiamine biosynthetic process"/>
    <property type="evidence" value="ECO:0007669"/>
    <property type="project" value="UniProtKB-KW"/>
</dbReference>
<dbReference type="GO" id="GO:0009229">
    <property type="term" value="P:thiamine diphosphate biosynthetic process"/>
    <property type="evidence" value="ECO:0007669"/>
    <property type="project" value="UniProtKB-UniRule"/>
</dbReference>
<dbReference type="GO" id="GO:0052837">
    <property type="term" value="P:thiazole biosynthetic process"/>
    <property type="evidence" value="ECO:0007669"/>
    <property type="project" value="InterPro"/>
</dbReference>
<dbReference type="GO" id="GO:0002937">
    <property type="term" value="P:tRNA 4-thiouridine biosynthesis"/>
    <property type="evidence" value="ECO:0007669"/>
    <property type="project" value="TreeGrafter"/>
</dbReference>
<dbReference type="CDD" id="cd01712">
    <property type="entry name" value="PPase_ThiI"/>
    <property type="match status" value="1"/>
</dbReference>
<dbReference type="CDD" id="cd11716">
    <property type="entry name" value="THUMP_ThiI"/>
    <property type="match status" value="1"/>
</dbReference>
<dbReference type="FunFam" id="3.30.2130.30:FF:000002">
    <property type="entry name" value="tRNA sulfurtransferase"/>
    <property type="match status" value="1"/>
</dbReference>
<dbReference type="FunFam" id="3.40.250.10:FF:000003">
    <property type="entry name" value="tRNA sulfurtransferase"/>
    <property type="match status" value="1"/>
</dbReference>
<dbReference type="FunFam" id="3.40.50.620:FF:000029">
    <property type="entry name" value="tRNA sulfurtransferase"/>
    <property type="match status" value="1"/>
</dbReference>
<dbReference type="Gene3D" id="3.30.2130.30">
    <property type="match status" value="1"/>
</dbReference>
<dbReference type="Gene3D" id="3.40.50.620">
    <property type="entry name" value="HUPs"/>
    <property type="match status" value="1"/>
</dbReference>
<dbReference type="Gene3D" id="3.40.250.10">
    <property type="entry name" value="Rhodanese-like domain"/>
    <property type="match status" value="1"/>
</dbReference>
<dbReference type="HAMAP" id="MF_00021">
    <property type="entry name" value="ThiI"/>
    <property type="match status" value="1"/>
</dbReference>
<dbReference type="InterPro" id="IPR001763">
    <property type="entry name" value="Rhodanese-like_dom"/>
</dbReference>
<dbReference type="InterPro" id="IPR036873">
    <property type="entry name" value="Rhodanese-like_dom_sf"/>
</dbReference>
<dbReference type="InterPro" id="IPR014729">
    <property type="entry name" value="Rossmann-like_a/b/a_fold"/>
</dbReference>
<dbReference type="InterPro" id="IPR020536">
    <property type="entry name" value="ThiI_AANH"/>
</dbReference>
<dbReference type="InterPro" id="IPR054173">
    <property type="entry name" value="ThiI_fer"/>
</dbReference>
<dbReference type="InterPro" id="IPR049961">
    <property type="entry name" value="ThiI_N"/>
</dbReference>
<dbReference type="InterPro" id="IPR026340">
    <property type="entry name" value="THII_Thiazole_biosynth_dom"/>
</dbReference>
<dbReference type="InterPro" id="IPR004114">
    <property type="entry name" value="THUMP_dom"/>
</dbReference>
<dbReference type="InterPro" id="IPR049962">
    <property type="entry name" value="THUMP_ThiI"/>
</dbReference>
<dbReference type="InterPro" id="IPR003720">
    <property type="entry name" value="tRNA_STrfase"/>
</dbReference>
<dbReference type="InterPro" id="IPR050102">
    <property type="entry name" value="tRNA_sulfurtransferase_ThiI"/>
</dbReference>
<dbReference type="NCBIfam" id="TIGR04271">
    <property type="entry name" value="ThiI_C_thiazole"/>
    <property type="match status" value="1"/>
</dbReference>
<dbReference type="NCBIfam" id="TIGR00342">
    <property type="entry name" value="tRNA uracil 4-sulfurtransferase ThiI"/>
    <property type="match status" value="1"/>
</dbReference>
<dbReference type="PANTHER" id="PTHR43209">
    <property type="entry name" value="TRNA SULFURTRANSFERASE"/>
    <property type="match status" value="1"/>
</dbReference>
<dbReference type="PANTHER" id="PTHR43209:SF1">
    <property type="entry name" value="TRNA SULFURTRANSFERASE"/>
    <property type="match status" value="1"/>
</dbReference>
<dbReference type="Pfam" id="PF02568">
    <property type="entry name" value="ThiI"/>
    <property type="match status" value="1"/>
</dbReference>
<dbReference type="Pfam" id="PF22025">
    <property type="entry name" value="ThiI_fer"/>
    <property type="match status" value="1"/>
</dbReference>
<dbReference type="Pfam" id="PF02926">
    <property type="entry name" value="THUMP"/>
    <property type="match status" value="1"/>
</dbReference>
<dbReference type="SMART" id="SM00981">
    <property type="entry name" value="THUMP"/>
    <property type="match status" value="1"/>
</dbReference>
<dbReference type="SUPFAM" id="SSF52402">
    <property type="entry name" value="Adenine nucleotide alpha hydrolases-like"/>
    <property type="match status" value="1"/>
</dbReference>
<dbReference type="SUPFAM" id="SSF52821">
    <property type="entry name" value="Rhodanese/Cell cycle control phosphatase"/>
    <property type="match status" value="1"/>
</dbReference>
<dbReference type="SUPFAM" id="SSF143437">
    <property type="entry name" value="THUMP domain-like"/>
    <property type="match status" value="1"/>
</dbReference>
<dbReference type="PROSITE" id="PS50206">
    <property type="entry name" value="RHODANESE_3"/>
    <property type="match status" value="1"/>
</dbReference>
<dbReference type="PROSITE" id="PS51165">
    <property type="entry name" value="THUMP"/>
    <property type="match status" value="1"/>
</dbReference>
<name>THII_KLEP7</name>
<protein>
    <recommendedName>
        <fullName evidence="1">tRNA sulfurtransferase</fullName>
        <ecNumber evidence="1">2.8.1.4</ecNumber>
    </recommendedName>
    <alternativeName>
        <fullName evidence="1">Sulfur carrier protein ThiS sulfurtransferase</fullName>
    </alternativeName>
    <alternativeName>
        <fullName evidence="1">Thiamine biosynthesis protein ThiI</fullName>
    </alternativeName>
    <alternativeName>
        <fullName evidence="1">tRNA 4-thiouridine synthase</fullName>
    </alternativeName>
</protein>
<accession>A6T5F6</accession>
<gene>
    <name evidence="1" type="primary">thiI</name>
    <name type="ordered locus">KPN78578_03660</name>
    <name type="ORF">KPN_00375</name>
</gene>
<proteinExistence type="inferred from homology"/>
<reference key="1">
    <citation type="submission" date="2006-09" db="EMBL/GenBank/DDBJ databases">
        <authorList>
            <consortium name="The Klebsiella pneumonia Genome Sequencing Project"/>
            <person name="McClelland M."/>
            <person name="Sanderson E.K."/>
            <person name="Spieth J."/>
            <person name="Clifton W.S."/>
            <person name="Latreille P."/>
            <person name="Sabo A."/>
            <person name="Pepin K."/>
            <person name="Bhonagiri V."/>
            <person name="Porwollik S."/>
            <person name="Ali J."/>
            <person name="Wilson R.K."/>
        </authorList>
    </citation>
    <scope>NUCLEOTIDE SEQUENCE [LARGE SCALE GENOMIC DNA]</scope>
    <source>
        <strain>ATCC 700721 / MGH 78578</strain>
    </source>
</reference>